<sequence>MKISEKEVQHVAHLSRLHLDQDELASMTEQLDGILSYMEKLAEVDTEGVLPTTHAFSKTNAFREDIVKDSLSQEESLANGPVQNGTAFQVPRVI</sequence>
<organism>
    <name type="scientific">Desulfotalea psychrophila (strain LSv54 / DSM 12343)</name>
    <dbReference type="NCBI Taxonomy" id="177439"/>
    <lineage>
        <taxon>Bacteria</taxon>
        <taxon>Pseudomonadati</taxon>
        <taxon>Thermodesulfobacteriota</taxon>
        <taxon>Desulfobulbia</taxon>
        <taxon>Desulfobulbales</taxon>
        <taxon>Desulfocapsaceae</taxon>
        <taxon>Desulfotalea</taxon>
    </lineage>
</organism>
<evidence type="ECO:0000255" key="1">
    <source>
        <dbReference type="HAMAP-Rule" id="MF_00122"/>
    </source>
</evidence>
<gene>
    <name evidence="1" type="primary">gatC</name>
    <name type="ordered locus">DP0644</name>
</gene>
<comment type="function">
    <text evidence="1">Allows the formation of correctly charged Asn-tRNA(Asn) or Gln-tRNA(Gln) through the transamidation of misacylated Asp-tRNA(Asn) or Glu-tRNA(Gln) in organisms which lack either or both of asparaginyl-tRNA or glutaminyl-tRNA synthetases. The reaction takes place in the presence of glutamine and ATP through an activated phospho-Asp-tRNA(Asn) or phospho-Glu-tRNA(Gln).</text>
</comment>
<comment type="catalytic activity">
    <reaction evidence="1">
        <text>L-glutamyl-tRNA(Gln) + L-glutamine + ATP + H2O = L-glutaminyl-tRNA(Gln) + L-glutamate + ADP + phosphate + H(+)</text>
        <dbReference type="Rhea" id="RHEA:17521"/>
        <dbReference type="Rhea" id="RHEA-COMP:9681"/>
        <dbReference type="Rhea" id="RHEA-COMP:9684"/>
        <dbReference type="ChEBI" id="CHEBI:15377"/>
        <dbReference type="ChEBI" id="CHEBI:15378"/>
        <dbReference type="ChEBI" id="CHEBI:29985"/>
        <dbReference type="ChEBI" id="CHEBI:30616"/>
        <dbReference type="ChEBI" id="CHEBI:43474"/>
        <dbReference type="ChEBI" id="CHEBI:58359"/>
        <dbReference type="ChEBI" id="CHEBI:78520"/>
        <dbReference type="ChEBI" id="CHEBI:78521"/>
        <dbReference type="ChEBI" id="CHEBI:456216"/>
    </reaction>
</comment>
<comment type="catalytic activity">
    <reaction evidence="1">
        <text>L-aspartyl-tRNA(Asn) + L-glutamine + ATP + H2O = L-asparaginyl-tRNA(Asn) + L-glutamate + ADP + phosphate + 2 H(+)</text>
        <dbReference type="Rhea" id="RHEA:14513"/>
        <dbReference type="Rhea" id="RHEA-COMP:9674"/>
        <dbReference type="Rhea" id="RHEA-COMP:9677"/>
        <dbReference type="ChEBI" id="CHEBI:15377"/>
        <dbReference type="ChEBI" id="CHEBI:15378"/>
        <dbReference type="ChEBI" id="CHEBI:29985"/>
        <dbReference type="ChEBI" id="CHEBI:30616"/>
        <dbReference type="ChEBI" id="CHEBI:43474"/>
        <dbReference type="ChEBI" id="CHEBI:58359"/>
        <dbReference type="ChEBI" id="CHEBI:78515"/>
        <dbReference type="ChEBI" id="CHEBI:78516"/>
        <dbReference type="ChEBI" id="CHEBI:456216"/>
    </reaction>
</comment>
<comment type="subunit">
    <text evidence="1">Heterotrimer of A, B and C subunits.</text>
</comment>
<comment type="similarity">
    <text evidence="1">Belongs to the GatC family.</text>
</comment>
<reference key="1">
    <citation type="journal article" date="2004" name="Environ. Microbiol.">
        <title>The genome of Desulfotalea psychrophila, a sulfate-reducing bacterium from permanently cold Arctic sediments.</title>
        <authorList>
            <person name="Rabus R."/>
            <person name="Ruepp A."/>
            <person name="Frickey T."/>
            <person name="Rattei T."/>
            <person name="Fartmann B."/>
            <person name="Stark M."/>
            <person name="Bauer M."/>
            <person name="Zibat A."/>
            <person name="Lombardot T."/>
            <person name="Becker I."/>
            <person name="Amann J."/>
            <person name="Gellner K."/>
            <person name="Teeling H."/>
            <person name="Leuschner W.D."/>
            <person name="Gloeckner F.-O."/>
            <person name="Lupas A.N."/>
            <person name="Amann R."/>
            <person name="Klenk H.-P."/>
        </authorList>
    </citation>
    <scope>NUCLEOTIDE SEQUENCE [LARGE SCALE GENOMIC DNA]</scope>
    <source>
        <strain>DSM 12343 / LSv54</strain>
    </source>
</reference>
<keyword id="KW-0067">ATP-binding</keyword>
<keyword id="KW-0436">Ligase</keyword>
<keyword id="KW-0547">Nucleotide-binding</keyword>
<keyword id="KW-0648">Protein biosynthesis</keyword>
<keyword id="KW-1185">Reference proteome</keyword>
<accession>Q6AQK0</accession>
<protein>
    <recommendedName>
        <fullName evidence="1">Aspartyl/glutamyl-tRNA(Asn/Gln) amidotransferase subunit C</fullName>
        <shortName evidence="1">Asp/Glu-ADT subunit C</shortName>
        <ecNumber evidence="1">6.3.5.-</ecNumber>
    </recommendedName>
</protein>
<proteinExistence type="inferred from homology"/>
<feature type="chain" id="PRO_1000016118" description="Aspartyl/glutamyl-tRNA(Asn/Gln) amidotransferase subunit C">
    <location>
        <begin position="1"/>
        <end position="94"/>
    </location>
</feature>
<dbReference type="EC" id="6.3.5.-" evidence="1"/>
<dbReference type="EMBL" id="CR522870">
    <property type="protein sequence ID" value="CAG35373.1"/>
    <property type="molecule type" value="Genomic_DNA"/>
</dbReference>
<dbReference type="RefSeq" id="WP_011187889.1">
    <property type="nucleotide sequence ID" value="NC_006138.1"/>
</dbReference>
<dbReference type="SMR" id="Q6AQK0"/>
<dbReference type="STRING" id="177439.DP0644"/>
<dbReference type="KEGG" id="dps:DP0644"/>
<dbReference type="eggNOG" id="COG0721">
    <property type="taxonomic scope" value="Bacteria"/>
</dbReference>
<dbReference type="HOGENOM" id="CLU_105899_6_1_7"/>
<dbReference type="OrthoDB" id="9813938at2"/>
<dbReference type="Proteomes" id="UP000000602">
    <property type="component" value="Chromosome"/>
</dbReference>
<dbReference type="GO" id="GO:0050566">
    <property type="term" value="F:asparaginyl-tRNA synthase (glutamine-hydrolyzing) activity"/>
    <property type="evidence" value="ECO:0007669"/>
    <property type="project" value="RHEA"/>
</dbReference>
<dbReference type="GO" id="GO:0005524">
    <property type="term" value="F:ATP binding"/>
    <property type="evidence" value="ECO:0007669"/>
    <property type="project" value="UniProtKB-KW"/>
</dbReference>
<dbReference type="GO" id="GO:0050567">
    <property type="term" value="F:glutaminyl-tRNA synthase (glutamine-hydrolyzing) activity"/>
    <property type="evidence" value="ECO:0007669"/>
    <property type="project" value="UniProtKB-UniRule"/>
</dbReference>
<dbReference type="GO" id="GO:0070681">
    <property type="term" value="P:glutaminyl-tRNAGln biosynthesis via transamidation"/>
    <property type="evidence" value="ECO:0007669"/>
    <property type="project" value="TreeGrafter"/>
</dbReference>
<dbReference type="GO" id="GO:0006450">
    <property type="term" value="P:regulation of translational fidelity"/>
    <property type="evidence" value="ECO:0007669"/>
    <property type="project" value="InterPro"/>
</dbReference>
<dbReference type="GO" id="GO:0006412">
    <property type="term" value="P:translation"/>
    <property type="evidence" value="ECO:0007669"/>
    <property type="project" value="UniProtKB-UniRule"/>
</dbReference>
<dbReference type="Gene3D" id="1.10.20.60">
    <property type="entry name" value="Glu-tRNAGln amidotransferase C subunit, N-terminal domain"/>
    <property type="match status" value="1"/>
</dbReference>
<dbReference type="HAMAP" id="MF_00122">
    <property type="entry name" value="GatC"/>
    <property type="match status" value="1"/>
</dbReference>
<dbReference type="InterPro" id="IPR036113">
    <property type="entry name" value="Asp/Glu-ADT_sf_sub_c"/>
</dbReference>
<dbReference type="InterPro" id="IPR003837">
    <property type="entry name" value="GatC"/>
</dbReference>
<dbReference type="NCBIfam" id="TIGR00135">
    <property type="entry name" value="gatC"/>
    <property type="match status" value="1"/>
</dbReference>
<dbReference type="PANTHER" id="PTHR15004">
    <property type="entry name" value="GLUTAMYL-TRNA(GLN) AMIDOTRANSFERASE SUBUNIT C, MITOCHONDRIAL"/>
    <property type="match status" value="1"/>
</dbReference>
<dbReference type="PANTHER" id="PTHR15004:SF0">
    <property type="entry name" value="GLUTAMYL-TRNA(GLN) AMIDOTRANSFERASE SUBUNIT C, MITOCHONDRIAL"/>
    <property type="match status" value="1"/>
</dbReference>
<dbReference type="Pfam" id="PF02686">
    <property type="entry name" value="GatC"/>
    <property type="match status" value="1"/>
</dbReference>
<dbReference type="SUPFAM" id="SSF141000">
    <property type="entry name" value="Glu-tRNAGln amidotransferase C subunit"/>
    <property type="match status" value="1"/>
</dbReference>
<name>GATC_DESPS</name>